<gene>
    <name evidence="1" type="primary">rpmJ</name>
    <name type="ordered locus">PLES_14351</name>
</gene>
<evidence type="ECO:0000255" key="1">
    <source>
        <dbReference type="HAMAP-Rule" id="MF_00251"/>
    </source>
</evidence>
<evidence type="ECO:0000305" key="2"/>
<protein>
    <recommendedName>
        <fullName evidence="1">Large ribosomal subunit protein bL36</fullName>
    </recommendedName>
    <alternativeName>
        <fullName evidence="2">50S ribosomal protein L36</fullName>
    </alternativeName>
</protein>
<name>RL36_PSEA8</name>
<organism>
    <name type="scientific">Pseudomonas aeruginosa (strain LESB58)</name>
    <dbReference type="NCBI Taxonomy" id="557722"/>
    <lineage>
        <taxon>Bacteria</taxon>
        <taxon>Pseudomonadati</taxon>
        <taxon>Pseudomonadota</taxon>
        <taxon>Gammaproteobacteria</taxon>
        <taxon>Pseudomonadales</taxon>
        <taxon>Pseudomonadaceae</taxon>
        <taxon>Pseudomonas</taxon>
    </lineage>
</organism>
<keyword id="KW-0687">Ribonucleoprotein</keyword>
<keyword id="KW-0689">Ribosomal protein</keyword>
<dbReference type="EMBL" id="FM209186">
    <property type="protein sequence ID" value="CAW26163.1"/>
    <property type="molecule type" value="Genomic_DNA"/>
</dbReference>
<dbReference type="SMR" id="B7V9F5"/>
<dbReference type="KEGG" id="pag:PLES_14351"/>
<dbReference type="HOGENOM" id="CLU_135723_3_1_6"/>
<dbReference type="GO" id="GO:1990904">
    <property type="term" value="C:ribonucleoprotein complex"/>
    <property type="evidence" value="ECO:0007669"/>
    <property type="project" value="UniProtKB-KW"/>
</dbReference>
<dbReference type="GO" id="GO:0005840">
    <property type="term" value="C:ribosome"/>
    <property type="evidence" value="ECO:0007669"/>
    <property type="project" value="UniProtKB-KW"/>
</dbReference>
<dbReference type="GO" id="GO:0003735">
    <property type="term" value="F:structural constituent of ribosome"/>
    <property type="evidence" value="ECO:0007669"/>
    <property type="project" value="InterPro"/>
</dbReference>
<dbReference type="GO" id="GO:0006412">
    <property type="term" value="P:translation"/>
    <property type="evidence" value="ECO:0007669"/>
    <property type="project" value="UniProtKB-UniRule"/>
</dbReference>
<dbReference type="HAMAP" id="MF_00251">
    <property type="entry name" value="Ribosomal_bL36"/>
    <property type="match status" value="1"/>
</dbReference>
<dbReference type="InterPro" id="IPR000473">
    <property type="entry name" value="Ribosomal_bL36"/>
</dbReference>
<dbReference type="InterPro" id="IPR035977">
    <property type="entry name" value="Ribosomal_bL36_sp"/>
</dbReference>
<dbReference type="InterPro" id="IPR047621">
    <property type="entry name" value="Ribosomal_L36_bact"/>
</dbReference>
<dbReference type="NCBIfam" id="NF002021">
    <property type="entry name" value="PRK00831.1"/>
    <property type="match status" value="1"/>
</dbReference>
<dbReference type="NCBIfam" id="TIGR01022">
    <property type="entry name" value="rpmJ_bact"/>
    <property type="match status" value="1"/>
</dbReference>
<dbReference type="PANTHER" id="PTHR47781">
    <property type="entry name" value="50S RIBOSOMAL PROTEIN L36 2"/>
    <property type="match status" value="1"/>
</dbReference>
<dbReference type="PANTHER" id="PTHR47781:SF1">
    <property type="entry name" value="LARGE RIBOSOMAL SUBUNIT PROTEIN BL36B"/>
    <property type="match status" value="1"/>
</dbReference>
<dbReference type="Pfam" id="PF00444">
    <property type="entry name" value="Ribosomal_L36"/>
    <property type="match status" value="1"/>
</dbReference>
<dbReference type="SUPFAM" id="SSF57840">
    <property type="entry name" value="Ribosomal protein L36"/>
    <property type="match status" value="1"/>
</dbReference>
<dbReference type="PROSITE" id="PS00828">
    <property type="entry name" value="RIBOSOMAL_L36"/>
    <property type="match status" value="1"/>
</dbReference>
<accession>B7V9F5</accession>
<reference key="1">
    <citation type="journal article" date="2009" name="Genome Res.">
        <title>Newly introduced genomic prophage islands are critical determinants of in vivo competitiveness in the Liverpool epidemic strain of Pseudomonas aeruginosa.</title>
        <authorList>
            <person name="Winstanley C."/>
            <person name="Langille M.G.I."/>
            <person name="Fothergill J.L."/>
            <person name="Kukavica-Ibrulj I."/>
            <person name="Paradis-Bleau C."/>
            <person name="Sanschagrin F."/>
            <person name="Thomson N.R."/>
            <person name="Winsor G.L."/>
            <person name="Quail M.A."/>
            <person name="Lennard N."/>
            <person name="Bignell A."/>
            <person name="Clarke L."/>
            <person name="Seeger K."/>
            <person name="Saunders D."/>
            <person name="Harris D."/>
            <person name="Parkhill J."/>
            <person name="Hancock R.E.W."/>
            <person name="Brinkman F.S.L."/>
            <person name="Levesque R.C."/>
        </authorList>
    </citation>
    <scope>NUCLEOTIDE SEQUENCE [LARGE SCALE GENOMIC DNA]</scope>
    <source>
        <strain>LESB58</strain>
    </source>
</reference>
<proteinExistence type="inferred from homology"/>
<sequence>MKVLASLKQAKLRHRDCQVVKRRGRLYVICKSNPRFKCVQGRPKPKIKRR</sequence>
<comment type="similarity">
    <text evidence="1">Belongs to the bacterial ribosomal protein bL36 family.</text>
</comment>
<feature type="chain" id="PRO_1000196203" description="Large ribosomal subunit protein bL36">
    <location>
        <begin position="1"/>
        <end position="50"/>
    </location>
</feature>